<organism>
    <name type="scientific">Arabidopsis thaliana</name>
    <name type="common">Mouse-ear cress</name>
    <dbReference type="NCBI Taxonomy" id="3702"/>
    <lineage>
        <taxon>Eukaryota</taxon>
        <taxon>Viridiplantae</taxon>
        <taxon>Streptophyta</taxon>
        <taxon>Embryophyta</taxon>
        <taxon>Tracheophyta</taxon>
        <taxon>Spermatophyta</taxon>
        <taxon>Magnoliopsida</taxon>
        <taxon>eudicotyledons</taxon>
        <taxon>Gunneridae</taxon>
        <taxon>Pentapetalae</taxon>
        <taxon>rosids</taxon>
        <taxon>malvids</taxon>
        <taxon>Brassicales</taxon>
        <taxon>Brassicaceae</taxon>
        <taxon>Camelineae</taxon>
        <taxon>Arabidopsis</taxon>
    </lineage>
</organism>
<sequence>MDPFNASWWTNMAWHGYSLSEDGTKFCEMLPTKINSFGLSEKILHKSVGLYFWEYPLPNLELIILSVFFFWQFFEILFKMSNIPIPKMPSMMLGCVVINLFSYTRPGSLLHRMFFPDDGRPKVAETGGAFGFVMYWFLKGVSIDVGMLRKTEPRAALIGFNTLVIPYISGYILMRTRKHFGKLAMTELQYQEIILLQSLSSFAGVNGLLTDLKINHSEFGRMVQSCAAVTDLVIFIMVSGTVLLKGQKGLPHGIVIVLVIGFLVYIVWPVMLWIIKQTPEGRLVKDVYIYLVMATAYFVYMFWLNFFQFSTYGWFIIGLATPAGPPLGSALIQRFECFNVGVLLPLFGSLSMEQLDISWLMREILNLKHMEGFAYEAISVILIVTVVKFVVTAITAFAVRIPYRDSIVLAMVLSNRSIFELGYLGYIVELKMFDNKSFTIAALSVLVSSLLTPIAIEFMYEPQHIFSSYRDRNMLTLKHDSKLKTLVCIHKPDHITSMVNFVELFNPTQESKLECNVLHLVELIGQAIPTFISHKMQKPKVGTRSCSRNVITAFLSLRRHLTKEAISIDIFTSASLVEHMHEDLCWLALDKNVALVVLPFHRSWSVDRSTIVSDDKAMQNLNHKVLKRASCSVGIFVYRKPLWESQMHGSCYKVCAIVVGGKDDKEALAFTNRMRRNKQTSVTILHLIPQLTTEESEDSVQKLDYDDIKEIMKTEDSNENDSWICIEKSVKEGAETSVILRSIAYDYDLFIVGRSSGMNSAVTKGLNEWTEFEELGALGDVIASKEFPSRASVLVLQQQQY</sequence>
<comment type="function">
    <text evidence="1">May operate as a cation/H(+) antiporter.</text>
</comment>
<comment type="subcellular location">
    <subcellularLocation>
        <location evidence="1">Membrane</location>
        <topology evidence="1">Multi-pass membrane protein</topology>
    </subcellularLocation>
</comment>
<comment type="tissue specificity">
    <text evidence="3">Expressed in pollen.</text>
</comment>
<comment type="similarity">
    <text evidence="4">Belongs to the monovalent cation:proton antiporter 2 (CPA2) transporter (TC 2.A.37) family. CHX (TC 2.A.37.4) subfamily.</text>
</comment>
<comment type="sequence caution" evidence="4">
    <conflict type="erroneous gene model prediction">
        <sequence resource="EMBL-CDS" id="AAC98449"/>
    </conflict>
</comment>
<accession>Q9ZUV9</accession>
<reference key="1">
    <citation type="journal article" date="1999" name="Nature">
        <title>Sequence and analysis of chromosome 2 of the plant Arabidopsis thaliana.</title>
        <authorList>
            <person name="Lin X."/>
            <person name="Kaul S."/>
            <person name="Rounsley S.D."/>
            <person name="Shea T.P."/>
            <person name="Benito M.-I."/>
            <person name="Town C.D."/>
            <person name="Fujii C.Y."/>
            <person name="Mason T.M."/>
            <person name="Bowman C.L."/>
            <person name="Barnstead M.E."/>
            <person name="Feldblyum T.V."/>
            <person name="Buell C.R."/>
            <person name="Ketchum K.A."/>
            <person name="Lee J.J."/>
            <person name="Ronning C.M."/>
            <person name="Koo H.L."/>
            <person name="Moffat K.S."/>
            <person name="Cronin L.A."/>
            <person name="Shen M."/>
            <person name="Pai G."/>
            <person name="Van Aken S."/>
            <person name="Umayam L."/>
            <person name="Tallon L.J."/>
            <person name="Gill J.E."/>
            <person name="Adams M.D."/>
            <person name="Carrera A.J."/>
            <person name="Creasy T.H."/>
            <person name="Goodman H.M."/>
            <person name="Somerville C.R."/>
            <person name="Copenhaver G.P."/>
            <person name="Preuss D."/>
            <person name="Nierman W.C."/>
            <person name="White O."/>
            <person name="Eisen J.A."/>
            <person name="Salzberg S.L."/>
            <person name="Fraser C.M."/>
            <person name="Venter J.C."/>
        </authorList>
    </citation>
    <scope>NUCLEOTIDE SEQUENCE [LARGE SCALE GENOMIC DNA]</scope>
    <source>
        <strain>cv. Columbia</strain>
    </source>
</reference>
<reference key="2">
    <citation type="journal article" date="2017" name="Plant J.">
        <title>Araport11: a complete reannotation of the Arabidopsis thaliana reference genome.</title>
        <authorList>
            <person name="Cheng C.Y."/>
            <person name="Krishnakumar V."/>
            <person name="Chan A.P."/>
            <person name="Thibaud-Nissen F."/>
            <person name="Schobel S."/>
            <person name="Town C.D."/>
        </authorList>
    </citation>
    <scope>GENOME REANNOTATION</scope>
    <source>
        <strain>cv. Columbia</strain>
    </source>
</reference>
<reference key="3">
    <citation type="journal article" date="2001" name="Plant Physiol.">
        <title>Phylogenetic relationships within cation transporter families of Arabidopsis.</title>
        <authorList>
            <person name="Maeser P."/>
            <person name="Thomine S."/>
            <person name="Schroeder J.I."/>
            <person name="Ward J.M."/>
            <person name="Hirschi K."/>
            <person name="Sze H."/>
            <person name="Talke I.N."/>
            <person name="Amtmann A."/>
            <person name="Maathuis F.J.M."/>
            <person name="Sanders D."/>
            <person name="Harper J.F."/>
            <person name="Tchieu J."/>
            <person name="Gribskov M."/>
            <person name="Persans M.W."/>
            <person name="Salt D.E."/>
            <person name="Kim S.A."/>
            <person name="Guerinot M.L."/>
        </authorList>
    </citation>
    <scope>GENE FAMILY</scope>
    <scope>NOMENCLATURE</scope>
</reference>
<reference key="4">
    <citation type="journal article" date="2004" name="Plant Physiol.">
        <title>Expression patterns of a novel AtCHX gene family highlight potential roles in osmotic adjustment and K+ homeostasis in pollen development.</title>
        <authorList>
            <person name="Sze H."/>
            <person name="Padmanaban S."/>
            <person name="Cellier F."/>
            <person name="Honys D."/>
            <person name="Cheng N.-H."/>
            <person name="Bock K.W."/>
            <person name="Conejero G."/>
            <person name="Li X."/>
            <person name="Twell D."/>
            <person name="Ward J.M."/>
            <person name="Hirschi K.D."/>
        </authorList>
    </citation>
    <scope>TISSUE SPECIFICITY</scope>
    <scope>GENE FAMILY</scope>
    <scope>NOMENCLATURE</scope>
</reference>
<feature type="chain" id="PRO_0000394978" description="Cation/H(+) antiporter 7">
    <location>
        <begin position="1"/>
        <end position="801"/>
    </location>
</feature>
<feature type="transmembrane region" description="Helical" evidence="2">
    <location>
        <begin position="58"/>
        <end position="78"/>
    </location>
</feature>
<feature type="transmembrane region" description="Helical" evidence="2">
    <location>
        <begin position="83"/>
        <end position="103"/>
    </location>
</feature>
<feature type="transmembrane region" description="Helical" evidence="2">
    <location>
        <begin position="128"/>
        <end position="148"/>
    </location>
</feature>
<feature type="transmembrane region" description="Helical" evidence="2">
    <location>
        <begin position="154"/>
        <end position="174"/>
    </location>
</feature>
<feature type="transmembrane region" description="Helical" evidence="2">
    <location>
        <begin position="192"/>
        <end position="212"/>
    </location>
</feature>
<feature type="transmembrane region" description="Helical" evidence="2">
    <location>
        <begin position="223"/>
        <end position="243"/>
    </location>
</feature>
<feature type="transmembrane region" description="Helical" evidence="2">
    <location>
        <begin position="254"/>
        <end position="274"/>
    </location>
</feature>
<feature type="transmembrane region" description="Helical" evidence="2">
    <location>
        <begin position="287"/>
        <end position="307"/>
    </location>
</feature>
<feature type="transmembrane region" description="Helical" evidence="2">
    <location>
        <begin position="312"/>
        <end position="332"/>
    </location>
</feature>
<feature type="transmembrane region" description="Helical" evidence="2">
    <location>
        <begin position="340"/>
        <end position="360"/>
    </location>
</feature>
<feature type="transmembrane region" description="Helical" evidence="2">
    <location>
        <begin position="377"/>
        <end position="397"/>
    </location>
</feature>
<feature type="transmembrane region" description="Helical" evidence="2">
    <location>
        <begin position="407"/>
        <end position="427"/>
    </location>
</feature>
<feature type="transmembrane region" description="Helical" evidence="2">
    <location>
        <begin position="438"/>
        <end position="458"/>
    </location>
</feature>
<name>CHX7_ARATH</name>
<gene>
    <name type="primary">CHX7</name>
    <name type="synonym">CHX07</name>
    <name type="ordered locus">At2g28170</name>
    <name type="ORF">F24D13.4</name>
</gene>
<dbReference type="EMBL" id="AC005851">
    <property type="protein sequence ID" value="AAC98449.1"/>
    <property type="status" value="ALT_SEQ"/>
    <property type="molecule type" value="Genomic_DNA"/>
</dbReference>
<dbReference type="EMBL" id="CP002685">
    <property type="protein sequence ID" value="AEC08087.1"/>
    <property type="molecule type" value="Genomic_DNA"/>
</dbReference>
<dbReference type="PIR" id="F84681">
    <property type="entry name" value="F84681"/>
</dbReference>
<dbReference type="RefSeq" id="NP_180384.2">
    <property type="nucleotide sequence ID" value="NM_128377.2"/>
</dbReference>
<dbReference type="STRING" id="3702.Q9ZUV9"/>
<dbReference type="PaxDb" id="3702-AT2G28170.1"/>
<dbReference type="EnsemblPlants" id="AT2G28170.1">
    <property type="protein sequence ID" value="AT2G28170.1"/>
    <property type="gene ID" value="AT2G28170"/>
</dbReference>
<dbReference type="GeneID" id="817363"/>
<dbReference type="Gramene" id="AT2G28170.1">
    <property type="protein sequence ID" value="AT2G28170.1"/>
    <property type="gene ID" value="AT2G28170"/>
</dbReference>
<dbReference type="KEGG" id="ath:AT2G28170"/>
<dbReference type="Araport" id="AT2G28170"/>
<dbReference type="TAIR" id="AT2G28170">
    <property type="gene designation" value="ATCHX7"/>
</dbReference>
<dbReference type="eggNOG" id="KOG1650">
    <property type="taxonomic scope" value="Eukaryota"/>
</dbReference>
<dbReference type="HOGENOM" id="CLU_005126_6_1_1"/>
<dbReference type="InParanoid" id="Q9ZUV9"/>
<dbReference type="OMA" id="LNEWTEF"/>
<dbReference type="PhylomeDB" id="Q9ZUV9"/>
<dbReference type="PRO" id="PR:Q9ZUV9"/>
<dbReference type="Proteomes" id="UP000006548">
    <property type="component" value="Chromosome 2"/>
</dbReference>
<dbReference type="ExpressionAtlas" id="Q9ZUV9">
    <property type="expression patterns" value="differential"/>
</dbReference>
<dbReference type="GO" id="GO:0016020">
    <property type="term" value="C:membrane"/>
    <property type="evidence" value="ECO:0007669"/>
    <property type="project" value="UniProtKB-SubCell"/>
</dbReference>
<dbReference type="GO" id="GO:0015297">
    <property type="term" value="F:antiporter activity"/>
    <property type="evidence" value="ECO:0007669"/>
    <property type="project" value="UniProtKB-KW"/>
</dbReference>
<dbReference type="GO" id="GO:0006813">
    <property type="term" value="P:potassium ion transport"/>
    <property type="evidence" value="ECO:0007669"/>
    <property type="project" value="UniProtKB-KW"/>
</dbReference>
<dbReference type="GO" id="GO:1902600">
    <property type="term" value="P:proton transmembrane transport"/>
    <property type="evidence" value="ECO:0007669"/>
    <property type="project" value="InterPro"/>
</dbReference>
<dbReference type="FunFam" id="1.20.1530.20:FF:000066">
    <property type="entry name" value="Cation/H(+) antiporter 7"/>
    <property type="match status" value="1"/>
</dbReference>
<dbReference type="Gene3D" id="1.20.1530.20">
    <property type="match status" value="1"/>
</dbReference>
<dbReference type="InterPro" id="IPR006153">
    <property type="entry name" value="Cation/H_exchanger_TM"/>
</dbReference>
<dbReference type="InterPro" id="IPR050794">
    <property type="entry name" value="CPA2_transporter"/>
</dbReference>
<dbReference type="InterPro" id="IPR038770">
    <property type="entry name" value="Na+/solute_symporter_sf"/>
</dbReference>
<dbReference type="PANTHER" id="PTHR32468">
    <property type="entry name" value="CATION/H + ANTIPORTER"/>
    <property type="match status" value="1"/>
</dbReference>
<dbReference type="PANTHER" id="PTHR32468:SF73">
    <property type="entry name" value="CATION_H(+) ANTIPORTER 6A-RELATED"/>
    <property type="match status" value="1"/>
</dbReference>
<dbReference type="Pfam" id="PF23256">
    <property type="entry name" value="CHX17_2nd"/>
    <property type="match status" value="1"/>
</dbReference>
<dbReference type="Pfam" id="PF23259">
    <property type="entry name" value="CHX17_C"/>
    <property type="match status" value="1"/>
</dbReference>
<dbReference type="Pfam" id="PF00999">
    <property type="entry name" value="Na_H_Exchanger"/>
    <property type="match status" value="1"/>
</dbReference>
<protein>
    <recommendedName>
        <fullName>Cation/H(+) antiporter 7</fullName>
    </recommendedName>
    <alternativeName>
        <fullName>Protein CATION/H+ EXCHANGER 7</fullName>
        <shortName>AtCHX7</shortName>
    </alternativeName>
</protein>
<proteinExistence type="evidence at transcript level"/>
<evidence type="ECO:0000250" key="1"/>
<evidence type="ECO:0000255" key="2"/>
<evidence type="ECO:0000269" key="3">
    <source>
    </source>
</evidence>
<evidence type="ECO:0000305" key="4"/>
<keyword id="KW-0050">Antiport</keyword>
<keyword id="KW-0406">Ion transport</keyword>
<keyword id="KW-0472">Membrane</keyword>
<keyword id="KW-0630">Potassium</keyword>
<keyword id="KW-0633">Potassium transport</keyword>
<keyword id="KW-1185">Reference proteome</keyword>
<keyword id="KW-0812">Transmembrane</keyword>
<keyword id="KW-1133">Transmembrane helix</keyword>
<keyword id="KW-0813">Transport</keyword>